<reference key="1">
    <citation type="journal article" date="2000" name="DNA Res.">
        <title>Complete genome structure of the nitrogen-fixing symbiotic bacterium Mesorhizobium loti.</title>
        <authorList>
            <person name="Kaneko T."/>
            <person name="Nakamura Y."/>
            <person name="Sato S."/>
            <person name="Asamizu E."/>
            <person name="Kato T."/>
            <person name="Sasamoto S."/>
            <person name="Watanabe A."/>
            <person name="Idesawa K."/>
            <person name="Ishikawa A."/>
            <person name="Kawashima K."/>
            <person name="Kimura T."/>
            <person name="Kishida Y."/>
            <person name="Kiyokawa C."/>
            <person name="Kohara M."/>
            <person name="Matsumoto M."/>
            <person name="Matsuno A."/>
            <person name="Mochizuki Y."/>
            <person name="Nakayama S."/>
            <person name="Nakazaki N."/>
            <person name="Shimpo S."/>
            <person name="Sugimoto M."/>
            <person name="Takeuchi C."/>
            <person name="Yamada M."/>
            <person name="Tabata S."/>
        </authorList>
    </citation>
    <scope>NUCLEOTIDE SEQUENCE [LARGE SCALE GENOMIC DNA]</scope>
    <source>
        <strain>LMG 29417 / CECT 9101 / MAFF 303099</strain>
    </source>
</reference>
<proteinExistence type="inferred from homology"/>
<keyword id="KW-0004">4Fe-4S</keyword>
<keyword id="KW-0028">Amino-acid biosynthesis</keyword>
<keyword id="KW-0100">Branched-chain amino acid biosynthesis</keyword>
<keyword id="KW-0408">Iron</keyword>
<keyword id="KW-0411">Iron-sulfur</keyword>
<keyword id="KW-0432">Leucine biosynthesis</keyword>
<keyword id="KW-0456">Lyase</keyword>
<keyword id="KW-0479">Metal-binding</keyword>
<protein>
    <recommendedName>
        <fullName evidence="1">3-isopropylmalate dehydratase large subunit</fullName>
        <ecNumber evidence="1">4.2.1.33</ecNumber>
    </recommendedName>
    <alternativeName>
        <fullName evidence="1">Alpha-IPM isomerase</fullName>
        <shortName evidence="1">IPMI</shortName>
    </alternativeName>
    <alternativeName>
        <fullName evidence="1">Isopropylmalate isomerase</fullName>
    </alternativeName>
</protein>
<organism>
    <name type="scientific">Mesorhizobium japonicum (strain LMG 29417 / CECT 9101 / MAFF 303099)</name>
    <name type="common">Mesorhizobium loti (strain MAFF 303099)</name>
    <dbReference type="NCBI Taxonomy" id="266835"/>
    <lineage>
        <taxon>Bacteria</taxon>
        <taxon>Pseudomonadati</taxon>
        <taxon>Pseudomonadota</taxon>
        <taxon>Alphaproteobacteria</taxon>
        <taxon>Hyphomicrobiales</taxon>
        <taxon>Phyllobacteriaceae</taxon>
        <taxon>Mesorhizobium</taxon>
    </lineage>
</organism>
<accession>Q98EF1</accession>
<dbReference type="EC" id="4.2.1.33" evidence="1"/>
<dbReference type="EMBL" id="BA000012">
    <property type="protein sequence ID" value="BAB50968.1"/>
    <property type="molecule type" value="Genomic_DNA"/>
</dbReference>
<dbReference type="RefSeq" id="WP_010912310.1">
    <property type="nucleotide sequence ID" value="NC_002678.2"/>
</dbReference>
<dbReference type="SMR" id="Q98EF1"/>
<dbReference type="GeneID" id="66681275"/>
<dbReference type="KEGG" id="mlo:mll4272"/>
<dbReference type="eggNOG" id="COG0065">
    <property type="taxonomic scope" value="Bacteria"/>
</dbReference>
<dbReference type="HOGENOM" id="CLU_006714_3_4_5"/>
<dbReference type="UniPathway" id="UPA00048">
    <property type="reaction ID" value="UER00071"/>
</dbReference>
<dbReference type="Proteomes" id="UP000000552">
    <property type="component" value="Chromosome"/>
</dbReference>
<dbReference type="GO" id="GO:0003861">
    <property type="term" value="F:3-isopropylmalate dehydratase activity"/>
    <property type="evidence" value="ECO:0007669"/>
    <property type="project" value="UniProtKB-UniRule"/>
</dbReference>
<dbReference type="GO" id="GO:0051539">
    <property type="term" value="F:4 iron, 4 sulfur cluster binding"/>
    <property type="evidence" value="ECO:0007669"/>
    <property type="project" value="UniProtKB-KW"/>
</dbReference>
<dbReference type="GO" id="GO:0046872">
    <property type="term" value="F:metal ion binding"/>
    <property type="evidence" value="ECO:0007669"/>
    <property type="project" value="UniProtKB-KW"/>
</dbReference>
<dbReference type="GO" id="GO:0009098">
    <property type="term" value="P:L-leucine biosynthetic process"/>
    <property type="evidence" value="ECO:0007669"/>
    <property type="project" value="UniProtKB-UniRule"/>
</dbReference>
<dbReference type="CDD" id="cd01583">
    <property type="entry name" value="IPMI"/>
    <property type="match status" value="1"/>
</dbReference>
<dbReference type="FunFam" id="3.30.499.10:FF:000006">
    <property type="entry name" value="3-isopropylmalate dehydratase large subunit"/>
    <property type="match status" value="1"/>
</dbReference>
<dbReference type="FunFam" id="3.30.499.10:FF:000007">
    <property type="entry name" value="3-isopropylmalate dehydratase large subunit"/>
    <property type="match status" value="1"/>
</dbReference>
<dbReference type="Gene3D" id="3.30.499.10">
    <property type="entry name" value="Aconitase, domain 3"/>
    <property type="match status" value="2"/>
</dbReference>
<dbReference type="HAMAP" id="MF_01026">
    <property type="entry name" value="LeuC_type1"/>
    <property type="match status" value="1"/>
</dbReference>
<dbReference type="InterPro" id="IPR004430">
    <property type="entry name" value="3-IsopropMal_deHydase_lsu"/>
</dbReference>
<dbReference type="InterPro" id="IPR015931">
    <property type="entry name" value="Acnase/IPM_dHydase_lsu_aba_1/3"/>
</dbReference>
<dbReference type="InterPro" id="IPR001030">
    <property type="entry name" value="Acoase/IPM_deHydtase_lsu_aba"/>
</dbReference>
<dbReference type="InterPro" id="IPR018136">
    <property type="entry name" value="Aconitase_4Fe-4S_BS"/>
</dbReference>
<dbReference type="InterPro" id="IPR036008">
    <property type="entry name" value="Aconitase_4Fe-4S_dom"/>
</dbReference>
<dbReference type="InterPro" id="IPR050067">
    <property type="entry name" value="IPM_dehydratase_rel_enz"/>
</dbReference>
<dbReference type="InterPro" id="IPR033941">
    <property type="entry name" value="IPMI_cat"/>
</dbReference>
<dbReference type="NCBIfam" id="TIGR00170">
    <property type="entry name" value="leuC"/>
    <property type="match status" value="1"/>
</dbReference>
<dbReference type="NCBIfam" id="NF004016">
    <property type="entry name" value="PRK05478.1"/>
    <property type="match status" value="1"/>
</dbReference>
<dbReference type="NCBIfam" id="NF009116">
    <property type="entry name" value="PRK12466.1"/>
    <property type="match status" value="1"/>
</dbReference>
<dbReference type="PANTHER" id="PTHR43822:SF9">
    <property type="entry name" value="3-ISOPROPYLMALATE DEHYDRATASE"/>
    <property type="match status" value="1"/>
</dbReference>
<dbReference type="PANTHER" id="PTHR43822">
    <property type="entry name" value="HOMOACONITASE, MITOCHONDRIAL-RELATED"/>
    <property type="match status" value="1"/>
</dbReference>
<dbReference type="Pfam" id="PF00330">
    <property type="entry name" value="Aconitase"/>
    <property type="match status" value="1"/>
</dbReference>
<dbReference type="PRINTS" id="PR00415">
    <property type="entry name" value="ACONITASE"/>
</dbReference>
<dbReference type="SUPFAM" id="SSF53732">
    <property type="entry name" value="Aconitase iron-sulfur domain"/>
    <property type="match status" value="1"/>
</dbReference>
<dbReference type="PROSITE" id="PS00450">
    <property type="entry name" value="ACONITASE_1"/>
    <property type="match status" value="1"/>
</dbReference>
<dbReference type="PROSITE" id="PS01244">
    <property type="entry name" value="ACONITASE_2"/>
    <property type="match status" value="1"/>
</dbReference>
<gene>
    <name evidence="1" type="primary">leuC</name>
    <name type="ordered locus">mll4272</name>
</gene>
<name>LEUC_RHILO</name>
<feature type="chain" id="PRO_0000076795" description="3-isopropylmalate dehydratase large subunit">
    <location>
        <begin position="1"/>
        <end position="469"/>
    </location>
</feature>
<feature type="binding site" evidence="1">
    <location>
        <position position="350"/>
    </location>
    <ligand>
        <name>[4Fe-4S] cluster</name>
        <dbReference type="ChEBI" id="CHEBI:49883"/>
    </ligand>
</feature>
<feature type="binding site" evidence="1">
    <location>
        <position position="410"/>
    </location>
    <ligand>
        <name>[4Fe-4S] cluster</name>
        <dbReference type="ChEBI" id="CHEBI:49883"/>
    </ligand>
</feature>
<feature type="binding site" evidence="1">
    <location>
        <position position="413"/>
    </location>
    <ligand>
        <name>[4Fe-4S] cluster</name>
        <dbReference type="ChEBI" id="CHEBI:49883"/>
    </ligand>
</feature>
<sequence length="469" mass="50872">MSAPRTLYDKIFDDHVVDRQDDGTCLLYIDRHLVHEVTSPQAFEGLRLSGRKVRHPEKTLAVVDHNVSTSPERKFGIKNEESRIQVEALAKNAKDFGVEYYSENDIRQGIVHIIGPEQGFTLPGMTIVCGDSHTSTHGAFGALAHGIGTSEVEHVLATQTLIQRKAKNMLVRVDGQLPEGVTAKDIILAIIGEIGTAGGTGYVIEYAGEAIRSLSMEGRMTICNMSIEGGARAGLIAADETTFAYVKDKPRAPKGAAWDAALAYWKTLQSDEGAHFDKVIVLDAAKLPPIVSWGSSPEDVVSVQGVVPNPEEITDENKRTSKIRALDYMGLTPGTKITDIALDRVFIGSCTNGRIEDLRAAAKVIEGKTVNPRVNAMIVPGSGLVKEQAEAEGLDKIFLAAGFDWREPGCSMCLAMNDDRLKPHERCASTSNRNFEGRQGFKGRTHLVSPAMAAAAAIAGHFVDIRDWK</sequence>
<evidence type="ECO:0000255" key="1">
    <source>
        <dbReference type="HAMAP-Rule" id="MF_01026"/>
    </source>
</evidence>
<comment type="function">
    <text evidence="1">Catalyzes the isomerization between 2-isopropylmalate and 3-isopropylmalate, via the formation of 2-isopropylmaleate.</text>
</comment>
<comment type="catalytic activity">
    <reaction evidence="1">
        <text>(2R,3S)-3-isopropylmalate = (2S)-2-isopropylmalate</text>
        <dbReference type="Rhea" id="RHEA:32287"/>
        <dbReference type="ChEBI" id="CHEBI:1178"/>
        <dbReference type="ChEBI" id="CHEBI:35121"/>
        <dbReference type="EC" id="4.2.1.33"/>
    </reaction>
</comment>
<comment type="cofactor">
    <cofactor evidence="1">
        <name>[4Fe-4S] cluster</name>
        <dbReference type="ChEBI" id="CHEBI:49883"/>
    </cofactor>
    <text evidence="1">Binds 1 [4Fe-4S] cluster per subunit.</text>
</comment>
<comment type="pathway">
    <text evidence="1">Amino-acid biosynthesis; L-leucine biosynthesis; L-leucine from 3-methyl-2-oxobutanoate: step 2/4.</text>
</comment>
<comment type="subunit">
    <text evidence="1">Heterodimer of LeuC and LeuD.</text>
</comment>
<comment type="similarity">
    <text evidence="1">Belongs to the aconitase/IPM isomerase family. LeuC type 1 subfamily.</text>
</comment>